<feature type="signal peptide" evidence="2">
    <location>
        <begin position="1"/>
        <end position="23"/>
    </location>
</feature>
<feature type="chain" id="PRO_0000030773" description="Ribosome-inactivating protein beta-momorcharin">
    <location>
        <begin position="24"/>
        <end position="286"/>
    </location>
</feature>
<feature type="active site" evidence="1">
    <location>
        <position position="93"/>
    </location>
</feature>
<feature type="active site" evidence="1">
    <location>
        <position position="132"/>
    </location>
</feature>
<feature type="active site" evidence="1">
    <location>
        <position position="181"/>
    </location>
</feature>
<feature type="active site" evidence="1">
    <location>
        <position position="184"/>
    </location>
</feature>
<feature type="glycosylation site" description="N-linked (GlcNAc...) asparagine">
    <location>
        <position position="74"/>
    </location>
</feature>
<feature type="sequence conflict" description="In Ref. 3 and 4." evidence="3" ref="3 4">
    <original>G</original>
    <variation>M</variation>
    <location>
        <position position="23"/>
    </location>
</feature>
<feature type="sequence conflict" description="In Ref. 5; AA sequence." evidence="3" ref="5">
    <original>Y</original>
    <variation>T</variation>
    <location>
        <position position="37"/>
    </location>
</feature>
<feature type="sequence conflict" description="In Ref. 5; AA sequence." evidence="3" ref="5">
    <original>S</original>
    <variation>P</variation>
    <location>
        <position position="67"/>
    </location>
</feature>
<feature type="sequence conflict" description="In Ref. 4; CAC08217." evidence="3" ref="4">
    <original>D</original>
    <variation>E</variation>
    <location>
        <position position="147"/>
    </location>
</feature>
<feature type="sequence conflict" description="In Ref. 1; AAB35194." evidence="3" ref="1">
    <original>I</original>
    <variation>T</variation>
    <location>
        <position position="188"/>
    </location>
</feature>
<feature type="sequence conflict" description="In Ref. 4; CAC08217." evidence="3" ref="4">
    <original>G</original>
    <variation>A</variation>
    <location>
        <position position="228"/>
    </location>
</feature>
<feature type="strand" evidence="4">
    <location>
        <begin position="25"/>
        <end position="28"/>
    </location>
</feature>
<feature type="helix" evidence="4">
    <location>
        <begin position="29"/>
        <end position="31"/>
    </location>
</feature>
<feature type="helix" evidence="4">
    <location>
        <begin position="34"/>
        <end position="45"/>
    </location>
</feature>
<feature type="strand" evidence="4">
    <location>
        <begin position="50"/>
        <end position="54"/>
    </location>
</feature>
<feature type="strand" evidence="4">
    <location>
        <begin position="57"/>
        <end position="60"/>
    </location>
</feature>
<feature type="strand" evidence="4">
    <location>
        <begin position="68"/>
        <end position="76"/>
    </location>
</feature>
<feature type="strand" evidence="4">
    <location>
        <begin position="82"/>
        <end position="88"/>
    </location>
</feature>
<feature type="turn" evidence="4">
    <location>
        <begin position="89"/>
        <end position="91"/>
    </location>
</feature>
<feature type="strand" evidence="4">
    <location>
        <begin position="94"/>
        <end position="99"/>
    </location>
</feature>
<feature type="strand" evidence="4">
    <location>
        <begin position="102"/>
        <end position="106"/>
    </location>
</feature>
<feature type="helix" evidence="4">
    <location>
        <begin position="111"/>
        <end position="116"/>
    </location>
</feature>
<feature type="strand" evidence="4">
    <location>
        <begin position="121"/>
        <end position="128"/>
    </location>
</feature>
<feature type="helix" evidence="4">
    <location>
        <begin position="132"/>
        <end position="139"/>
    </location>
</feature>
<feature type="helix" evidence="4">
    <location>
        <begin position="143"/>
        <end position="145"/>
    </location>
</feature>
<feature type="helix" evidence="4">
    <location>
        <begin position="150"/>
        <end position="161"/>
    </location>
</feature>
<feature type="turn" evidence="4">
    <location>
        <begin position="165"/>
        <end position="167"/>
    </location>
</feature>
<feature type="helix" evidence="4">
    <location>
        <begin position="168"/>
        <end position="177"/>
    </location>
</feature>
<feature type="helix" evidence="4">
    <location>
        <begin position="180"/>
        <end position="184"/>
    </location>
</feature>
<feature type="helix" evidence="4">
    <location>
        <begin position="186"/>
        <end position="194"/>
    </location>
</feature>
<feature type="strand" evidence="4">
    <location>
        <begin position="196"/>
        <end position="200"/>
    </location>
</feature>
<feature type="helix" evidence="4">
    <location>
        <begin position="205"/>
        <end position="210"/>
    </location>
</feature>
<feature type="turn" evidence="4">
    <location>
        <begin position="211"/>
        <end position="214"/>
    </location>
</feature>
<feature type="helix" evidence="4">
    <location>
        <begin position="215"/>
        <end position="222"/>
    </location>
</feature>
<feature type="turn" evidence="4">
    <location>
        <begin position="223"/>
        <end position="228"/>
    </location>
</feature>
<feature type="strand" evidence="4">
    <location>
        <begin position="229"/>
        <end position="237"/>
    </location>
</feature>
<feature type="turn" evidence="5">
    <location>
        <begin position="239"/>
        <end position="241"/>
    </location>
</feature>
<feature type="strand" evidence="4">
    <location>
        <begin position="243"/>
        <end position="248"/>
    </location>
</feature>
<feature type="helix" evidence="4">
    <location>
        <begin position="252"/>
        <end position="256"/>
    </location>
</feature>
<feature type="strand" evidence="5">
    <location>
        <begin position="260"/>
        <end position="262"/>
    </location>
</feature>
<feature type="helix" evidence="4">
    <location>
        <begin position="264"/>
        <end position="269"/>
    </location>
</feature>
<feature type="turn" evidence="5">
    <location>
        <begin position="274"/>
        <end position="276"/>
    </location>
</feature>
<feature type="turn" evidence="5">
    <location>
        <begin position="279"/>
        <end position="281"/>
    </location>
</feature>
<gene>
    <name type="primary">MAP30</name>
    <name type="synonym">RIP</name>
</gene>
<proteinExistence type="evidence at protein level"/>
<comment type="function">
    <text>Irreversibly relaxes supercoiled DNA and catalyzes double-stranded breakage. Also acts as a ribosome inactivating protein.</text>
</comment>
<comment type="catalytic activity">
    <reaction>
        <text>Endohydrolysis of the N-glycosidic bond at one specific adenosine on the 28S rRNA.</text>
        <dbReference type="EC" id="3.2.2.22"/>
    </reaction>
</comment>
<comment type="PTM">
    <text>Bound to a branched hexasaccharide.</text>
</comment>
<comment type="miscellaneous">
    <text>Possesses anti-HIV and antitumoral activities. Inhibits HIV-1 integrase.</text>
</comment>
<comment type="miscellaneous">
    <text>Manganese or zinc required for enhancing substrate binding rather than catalysis.</text>
</comment>
<comment type="miscellaneous">
    <text>The oligosaccharide does not influence the fold of the polypeptide chain and probably does not play a role in the enzymatic function.</text>
</comment>
<comment type="miscellaneous">
    <text>Is not toxic to uninfected normal cells as it cannot enter into them.</text>
</comment>
<comment type="similarity">
    <text evidence="3">Belongs to the ribosome-inactivating protein family. Type 1 RIP subfamily.</text>
</comment>
<accession>P24817</accession>
<accession>Q41257</accession>
<accession>Q9FSH2</accession>
<accession>Q9FUV7</accession>
<name>RIP3_MOMCH</name>
<protein>
    <recommendedName>
        <fullName>Ribosome-inactivating protein beta-momorcharin</fullName>
        <shortName>B-MMC</shortName>
        <ecNumber>3.2.2.22</ecNumber>
    </recommendedName>
    <alternativeName>
        <fullName>MAP 30</fullName>
    </alternativeName>
    <alternativeName>
        <fullName>rRNA N-glycosidase</fullName>
    </alternativeName>
</protein>
<evidence type="ECO:0000250" key="1"/>
<evidence type="ECO:0000269" key="2">
    <source>
    </source>
</evidence>
<evidence type="ECO:0000305" key="3"/>
<evidence type="ECO:0007829" key="4">
    <source>
        <dbReference type="PDB" id="1CF5"/>
    </source>
</evidence>
<evidence type="ECO:0007829" key="5">
    <source>
        <dbReference type="PDB" id="1D8V"/>
    </source>
</evidence>
<reference key="1">
    <citation type="journal article" date="1995" name="Gene">
        <title>Anti-HIV and anti-tumor activities of recombinant MAP30 from bitter melon.</title>
        <authorList>
            <person name="Lee-Huang S."/>
            <person name="Huang P.L."/>
            <person name="Chen H.-C."/>
            <person name="Huang P.L."/>
            <person name="Bourinbaiar A."/>
            <person name="Huang H.I."/>
            <person name="Kung H.-F."/>
        </authorList>
    </citation>
    <scope>NUCLEOTIDE SEQUENCE [GENOMIC DNA]</scope>
    <source>
        <tissue>Leaf</tissue>
    </source>
</reference>
<reference key="2">
    <citation type="submission" date="2000-07" db="EMBL/GenBank/DDBJ databases">
        <authorList>
            <person name="Quanhong Y."/>
            <person name="Rihe P."/>
            <person name="Aisheng X."/>
        </authorList>
    </citation>
    <scope>NUCLEOTIDE SEQUENCE</scope>
</reference>
<reference key="3">
    <citation type="submission" date="2004-01" db="EMBL/GenBank/DDBJ databases">
        <title>Cloning rip gene and identification of its resistance to Aspergillus flavus.</title>
        <authorList>
            <person name="Wei Y.-F."/>
            <person name="Cai L.-B."/>
            <person name="Zhuang W."/>
        </authorList>
    </citation>
    <scope>NUCLEOTIDE SEQUENCE OF 23-286</scope>
</reference>
<reference key="4">
    <citation type="submission" date="2000-09" db="EMBL/GenBank/DDBJ databases">
        <title>Expression of a RIP gene from Momordica charantia in E. coli.</title>
        <authorList>
            <person name="Nguyen Huy H."/>
            <person name="Nghiem Ngoc M."/>
            <person name="Dao Huy P."/>
            <person name="Le Tran B."/>
            <person name="Nong Van H."/>
        </authorList>
    </citation>
    <scope>NUCLEOTIDE SEQUENCE OF 23-286</scope>
</reference>
<reference key="5">
    <citation type="journal article" date="1990" name="FEBS Lett.">
        <title>MAP 30: a new inhibitor of HIV-1 infection and replication.</title>
        <authorList>
            <person name="Lee-Huang S."/>
            <person name="Huang P.L."/>
            <person name="Nara P.L."/>
            <person name="Chen H.-C."/>
            <person name="Kung H.-F."/>
            <person name="Huang P."/>
            <person name="Huang H.I."/>
            <person name="Huang P.L."/>
        </authorList>
    </citation>
    <scope>PROTEIN SEQUENCE OF 24-67</scope>
    <source>
        <tissue>Seed</tissue>
    </source>
</reference>
<reference key="6">
    <citation type="journal article" date="1999" name="Cell">
        <title>Solution structure of anti-HIV-1 and anti-tumor protein MAP30: structural insights into its multiple functions.</title>
        <authorList>
            <person name="Wang Y.-X."/>
            <person name="Neamati N."/>
            <person name="Jacob J."/>
            <person name="Palmer I."/>
            <person name="Stahl S.J."/>
            <person name="Kaufman J.D."/>
            <person name="Huang P.L."/>
            <person name="Huang P.L."/>
            <person name="Winslow H.E."/>
            <person name="Pommier Y."/>
            <person name="Wingfield P.T."/>
            <person name="Lee-Huang S."/>
            <person name="Bax A."/>
            <person name="Torchia D.A."/>
        </authorList>
    </citation>
    <scope>STRUCTURE BY NMR OF 24-286</scope>
    <scope>DNA-BINDING</scope>
</reference>
<reference key="7">
    <citation type="journal article" date="1999" name="Acta Crystallogr. D">
        <title>Three-dimensional structure of beta-momorcharin at 2.55 A resolution.</title>
        <authorList>
            <person name="Yuan Y.-R."/>
            <person name="He Y.-N."/>
            <person name="Xiong J.-P."/>
            <person name="Xia Z.-X."/>
        </authorList>
    </citation>
    <scope>X-RAY CRYSTALLOGRAPHY (2.55 ANGSTROMS) OF 24-272</scope>
</reference>
<dbReference type="EC" id="3.2.2.22"/>
<dbReference type="EMBL" id="S79450">
    <property type="protein sequence ID" value="AAB35194.2"/>
    <property type="molecule type" value="Genomic_DNA"/>
</dbReference>
<dbReference type="EMBL" id="AF284811">
    <property type="protein sequence ID" value="AAG33028.1"/>
    <property type="molecule type" value="Genomic_DNA"/>
</dbReference>
<dbReference type="EMBL" id="AY523412">
    <property type="protein sequence ID" value="AAS17014.1"/>
    <property type="molecule type" value="mRNA"/>
</dbReference>
<dbReference type="EMBL" id="AJ294541">
    <property type="protein sequence ID" value="CAC08217.1"/>
    <property type="molecule type" value="Genomic_DNA"/>
</dbReference>
<dbReference type="PIR" id="B61318">
    <property type="entry name" value="B61318"/>
</dbReference>
<dbReference type="PIR" id="JC4235">
    <property type="entry name" value="JC4235"/>
</dbReference>
<dbReference type="PDB" id="1CF5">
    <property type="method" value="X-ray"/>
    <property type="resolution" value="2.55 A"/>
    <property type="chains" value="A/B=24-272"/>
</dbReference>
<dbReference type="PDB" id="1D8V">
    <property type="method" value="NMR"/>
    <property type="chains" value="A=24-286"/>
</dbReference>
<dbReference type="PDBsum" id="1CF5"/>
<dbReference type="PDBsum" id="1D8V"/>
<dbReference type="BMRB" id="P24817"/>
<dbReference type="SMR" id="P24817"/>
<dbReference type="GlyCosmos" id="P24817">
    <property type="glycosylation" value="1 site, No reported glycans"/>
</dbReference>
<dbReference type="BRENDA" id="3.2.2.22">
    <property type="organism ID" value="3398"/>
</dbReference>
<dbReference type="EvolutionaryTrace" id="P24817"/>
<dbReference type="Proteomes" id="UP000504603">
    <property type="component" value="Unplaced"/>
</dbReference>
<dbReference type="GO" id="GO:0030598">
    <property type="term" value="F:rRNA N-glycosylase activity"/>
    <property type="evidence" value="ECO:0007669"/>
    <property type="project" value="UniProtKB-EC"/>
</dbReference>
<dbReference type="GO" id="GO:0090729">
    <property type="term" value="F:toxin activity"/>
    <property type="evidence" value="ECO:0007669"/>
    <property type="project" value="UniProtKB-KW"/>
</dbReference>
<dbReference type="GO" id="GO:0006952">
    <property type="term" value="P:defense response"/>
    <property type="evidence" value="ECO:0007669"/>
    <property type="project" value="UniProtKB-KW"/>
</dbReference>
<dbReference type="GO" id="GO:0017148">
    <property type="term" value="P:negative regulation of translation"/>
    <property type="evidence" value="ECO:0007669"/>
    <property type="project" value="UniProtKB-KW"/>
</dbReference>
<dbReference type="GO" id="GO:0050688">
    <property type="term" value="P:regulation of defense response to virus"/>
    <property type="evidence" value="ECO:0007669"/>
    <property type="project" value="UniProtKB-KW"/>
</dbReference>
<dbReference type="Gene3D" id="3.40.420.10">
    <property type="entry name" value="Ricin (A subunit), domain 1"/>
    <property type="match status" value="1"/>
</dbReference>
<dbReference type="Gene3D" id="4.10.470.10">
    <property type="entry name" value="Ricin (A Subunit), domain 2"/>
    <property type="match status" value="1"/>
</dbReference>
<dbReference type="InterPro" id="IPR036041">
    <property type="entry name" value="Ribosome-inact_prot_sf"/>
</dbReference>
<dbReference type="InterPro" id="IPR017989">
    <property type="entry name" value="Ribosome_inactivat_1/2"/>
</dbReference>
<dbReference type="InterPro" id="IPR001574">
    <property type="entry name" value="Ribosome_inactivat_prot"/>
</dbReference>
<dbReference type="InterPro" id="IPR017988">
    <property type="entry name" value="Ribosome_inactivat_prot_CS"/>
</dbReference>
<dbReference type="InterPro" id="IPR016138">
    <property type="entry name" value="Ribosome_inactivat_prot_sub1"/>
</dbReference>
<dbReference type="InterPro" id="IPR016139">
    <property type="entry name" value="Ribosome_inactivat_prot_sub2"/>
</dbReference>
<dbReference type="PANTHER" id="PTHR33453">
    <property type="match status" value="1"/>
</dbReference>
<dbReference type="PANTHER" id="PTHR33453:SF34">
    <property type="entry name" value="RIBOSOME-INACTIVATING PROTEIN"/>
    <property type="match status" value="1"/>
</dbReference>
<dbReference type="Pfam" id="PF00161">
    <property type="entry name" value="RIP"/>
    <property type="match status" value="1"/>
</dbReference>
<dbReference type="PRINTS" id="PR00396">
    <property type="entry name" value="SHIGARICIN"/>
</dbReference>
<dbReference type="SUPFAM" id="SSF56371">
    <property type="entry name" value="Ribosome inactivating proteins (RIP)"/>
    <property type="match status" value="1"/>
</dbReference>
<dbReference type="PROSITE" id="PS00275">
    <property type="entry name" value="SHIGA_RICIN"/>
    <property type="match status" value="1"/>
</dbReference>
<sequence length="286" mass="32031">MVKCLLLSFLIIAIFIGVPTAKGDVNFDLSTATAKTYTKFIEDFRATLPFSHKVYDIPLLYSTISDSRRFILLNLTSYAYETISVAIDVTNVYVVAYRTRDVSYFFKESPPEAYNILFKGTRKITLPYTGNYENLQTAAHKIRENIDLGLPALSSAITTLFYYNAQSAPSALLVLIQTTAEAARFKYIERHVAKYVATNFKPNLAIISLENQWSALSKQIFLAQNQGGKFRNPVDLIKPTGERFQVTNVDSDVVKGNIKLLLNSRASTADENFITTMTLLGESVVN</sequence>
<keyword id="KW-0002">3D-structure</keyword>
<keyword id="KW-0930">Antiviral protein</keyword>
<keyword id="KW-0903">Direct protein sequencing</keyword>
<keyword id="KW-0325">Glycoprotein</keyword>
<keyword id="KW-0378">Hydrolase</keyword>
<keyword id="KW-0611">Plant defense</keyword>
<keyword id="KW-0652">Protein synthesis inhibitor</keyword>
<keyword id="KW-1185">Reference proteome</keyword>
<keyword id="KW-0732">Signal</keyword>
<keyword id="KW-0800">Toxin</keyword>
<organism>
    <name type="scientific">Momordica charantia</name>
    <name type="common">Bitter gourd</name>
    <name type="synonym">Balsam pear</name>
    <dbReference type="NCBI Taxonomy" id="3673"/>
    <lineage>
        <taxon>Eukaryota</taxon>
        <taxon>Viridiplantae</taxon>
        <taxon>Streptophyta</taxon>
        <taxon>Embryophyta</taxon>
        <taxon>Tracheophyta</taxon>
        <taxon>Spermatophyta</taxon>
        <taxon>Magnoliopsida</taxon>
        <taxon>eudicotyledons</taxon>
        <taxon>Gunneridae</taxon>
        <taxon>Pentapetalae</taxon>
        <taxon>rosids</taxon>
        <taxon>fabids</taxon>
        <taxon>Cucurbitales</taxon>
        <taxon>Cucurbitaceae</taxon>
        <taxon>Momordiceae</taxon>
        <taxon>Momordica</taxon>
    </lineage>
</organism>